<comment type="function">
    <text evidence="1">The alpha subunit is responsible for the aldol cleavage of indoleglycerol phosphate to indole and glyceraldehyde 3-phosphate.</text>
</comment>
<comment type="catalytic activity">
    <reaction evidence="1">
        <text>(1S,2R)-1-C-(indol-3-yl)glycerol 3-phosphate + L-serine = D-glyceraldehyde 3-phosphate + L-tryptophan + H2O</text>
        <dbReference type="Rhea" id="RHEA:10532"/>
        <dbReference type="ChEBI" id="CHEBI:15377"/>
        <dbReference type="ChEBI" id="CHEBI:33384"/>
        <dbReference type="ChEBI" id="CHEBI:57912"/>
        <dbReference type="ChEBI" id="CHEBI:58866"/>
        <dbReference type="ChEBI" id="CHEBI:59776"/>
        <dbReference type="EC" id="4.2.1.20"/>
    </reaction>
</comment>
<comment type="pathway">
    <text evidence="1">Amino-acid biosynthesis; L-tryptophan biosynthesis; L-tryptophan from chorismate: step 5/5.</text>
</comment>
<comment type="subunit">
    <text evidence="1">Tetramer of two alpha and two beta chains.</text>
</comment>
<comment type="similarity">
    <text evidence="1">Belongs to the TrpA family.</text>
</comment>
<name>TRPA_BORPA</name>
<proteinExistence type="inferred from homology"/>
<organism>
    <name type="scientific">Bordetella parapertussis (strain 12822 / ATCC BAA-587 / NCTC 13253)</name>
    <dbReference type="NCBI Taxonomy" id="257311"/>
    <lineage>
        <taxon>Bacteria</taxon>
        <taxon>Pseudomonadati</taxon>
        <taxon>Pseudomonadota</taxon>
        <taxon>Betaproteobacteria</taxon>
        <taxon>Burkholderiales</taxon>
        <taxon>Alcaligenaceae</taxon>
        <taxon>Bordetella</taxon>
    </lineage>
</organism>
<evidence type="ECO:0000255" key="1">
    <source>
        <dbReference type="HAMAP-Rule" id="MF_00131"/>
    </source>
</evidence>
<gene>
    <name evidence="1" type="primary">trpA</name>
    <name type="ordered locus">BPP3322</name>
</gene>
<keyword id="KW-0028">Amino-acid biosynthesis</keyword>
<keyword id="KW-0057">Aromatic amino acid biosynthesis</keyword>
<keyword id="KW-0456">Lyase</keyword>
<keyword id="KW-0822">Tryptophan biosynthesis</keyword>
<protein>
    <recommendedName>
        <fullName evidence="1">Tryptophan synthase alpha chain</fullName>
        <ecNumber evidence="1">4.2.1.20</ecNumber>
    </recommendedName>
</protein>
<feature type="chain" id="PRO_0000098748" description="Tryptophan synthase alpha chain">
    <location>
        <begin position="1"/>
        <end position="285"/>
    </location>
</feature>
<feature type="active site" description="Proton acceptor" evidence="1">
    <location>
        <position position="53"/>
    </location>
</feature>
<feature type="active site" description="Proton acceptor" evidence="1">
    <location>
        <position position="64"/>
    </location>
</feature>
<dbReference type="EC" id="4.2.1.20" evidence="1"/>
<dbReference type="EMBL" id="BX640433">
    <property type="protein sequence ID" value="CAE38607.1"/>
    <property type="molecule type" value="Genomic_DNA"/>
</dbReference>
<dbReference type="RefSeq" id="WP_010929007.1">
    <property type="nucleotide sequence ID" value="NC_002928.3"/>
</dbReference>
<dbReference type="SMR" id="Q7W5G9"/>
<dbReference type="GeneID" id="93205104"/>
<dbReference type="KEGG" id="bpa:BPP3322"/>
<dbReference type="HOGENOM" id="CLU_016734_0_0_4"/>
<dbReference type="UniPathway" id="UPA00035">
    <property type="reaction ID" value="UER00044"/>
</dbReference>
<dbReference type="Proteomes" id="UP000001421">
    <property type="component" value="Chromosome"/>
</dbReference>
<dbReference type="GO" id="GO:0005829">
    <property type="term" value="C:cytosol"/>
    <property type="evidence" value="ECO:0007669"/>
    <property type="project" value="TreeGrafter"/>
</dbReference>
<dbReference type="GO" id="GO:0004834">
    <property type="term" value="F:tryptophan synthase activity"/>
    <property type="evidence" value="ECO:0007669"/>
    <property type="project" value="UniProtKB-UniRule"/>
</dbReference>
<dbReference type="CDD" id="cd04724">
    <property type="entry name" value="Tryptophan_synthase_alpha"/>
    <property type="match status" value="1"/>
</dbReference>
<dbReference type="FunFam" id="3.20.20.70:FF:000037">
    <property type="entry name" value="Tryptophan synthase alpha chain"/>
    <property type="match status" value="1"/>
</dbReference>
<dbReference type="Gene3D" id="3.20.20.70">
    <property type="entry name" value="Aldolase class I"/>
    <property type="match status" value="1"/>
</dbReference>
<dbReference type="HAMAP" id="MF_00131">
    <property type="entry name" value="Trp_synth_alpha"/>
    <property type="match status" value="1"/>
</dbReference>
<dbReference type="InterPro" id="IPR013785">
    <property type="entry name" value="Aldolase_TIM"/>
</dbReference>
<dbReference type="InterPro" id="IPR011060">
    <property type="entry name" value="RibuloseP-bd_barrel"/>
</dbReference>
<dbReference type="InterPro" id="IPR018204">
    <property type="entry name" value="Trp_synthase_alpha_AS"/>
</dbReference>
<dbReference type="InterPro" id="IPR002028">
    <property type="entry name" value="Trp_synthase_suA"/>
</dbReference>
<dbReference type="NCBIfam" id="TIGR00262">
    <property type="entry name" value="trpA"/>
    <property type="match status" value="1"/>
</dbReference>
<dbReference type="PANTHER" id="PTHR43406:SF1">
    <property type="entry name" value="TRYPTOPHAN SYNTHASE ALPHA CHAIN, CHLOROPLASTIC"/>
    <property type="match status" value="1"/>
</dbReference>
<dbReference type="PANTHER" id="PTHR43406">
    <property type="entry name" value="TRYPTOPHAN SYNTHASE, ALPHA CHAIN"/>
    <property type="match status" value="1"/>
</dbReference>
<dbReference type="Pfam" id="PF00290">
    <property type="entry name" value="Trp_syntA"/>
    <property type="match status" value="1"/>
</dbReference>
<dbReference type="SUPFAM" id="SSF51366">
    <property type="entry name" value="Ribulose-phoshate binding barrel"/>
    <property type="match status" value="1"/>
</dbReference>
<dbReference type="PROSITE" id="PS00167">
    <property type="entry name" value="TRP_SYNTHASE_ALPHA"/>
    <property type="match status" value="1"/>
</dbReference>
<accession>Q7W5G9</accession>
<reference key="1">
    <citation type="journal article" date="2003" name="Nat. Genet.">
        <title>Comparative analysis of the genome sequences of Bordetella pertussis, Bordetella parapertussis and Bordetella bronchiseptica.</title>
        <authorList>
            <person name="Parkhill J."/>
            <person name="Sebaihia M."/>
            <person name="Preston A."/>
            <person name="Murphy L.D."/>
            <person name="Thomson N.R."/>
            <person name="Harris D.E."/>
            <person name="Holden M.T.G."/>
            <person name="Churcher C.M."/>
            <person name="Bentley S.D."/>
            <person name="Mungall K.L."/>
            <person name="Cerdeno-Tarraga A.-M."/>
            <person name="Temple L."/>
            <person name="James K.D."/>
            <person name="Harris B."/>
            <person name="Quail M.A."/>
            <person name="Achtman M."/>
            <person name="Atkin R."/>
            <person name="Baker S."/>
            <person name="Basham D."/>
            <person name="Bason N."/>
            <person name="Cherevach I."/>
            <person name="Chillingworth T."/>
            <person name="Collins M."/>
            <person name="Cronin A."/>
            <person name="Davis P."/>
            <person name="Doggett J."/>
            <person name="Feltwell T."/>
            <person name="Goble A."/>
            <person name="Hamlin N."/>
            <person name="Hauser H."/>
            <person name="Holroyd S."/>
            <person name="Jagels K."/>
            <person name="Leather S."/>
            <person name="Moule S."/>
            <person name="Norberczak H."/>
            <person name="O'Neil S."/>
            <person name="Ormond D."/>
            <person name="Price C."/>
            <person name="Rabbinowitsch E."/>
            <person name="Rutter S."/>
            <person name="Sanders M."/>
            <person name="Saunders D."/>
            <person name="Seeger K."/>
            <person name="Sharp S."/>
            <person name="Simmonds M."/>
            <person name="Skelton J."/>
            <person name="Squares R."/>
            <person name="Squares S."/>
            <person name="Stevens K."/>
            <person name="Unwin L."/>
            <person name="Whitehead S."/>
            <person name="Barrell B.G."/>
            <person name="Maskell D.J."/>
        </authorList>
    </citation>
    <scope>NUCLEOTIDE SEQUENCE [LARGE SCALE GENOMIC DNA]</scope>
    <source>
        <strain>12822 / ATCC BAA-587 / NCTC 13253</strain>
    </source>
</reference>
<sequence>MTTTDRIAAAFARVSEAGRAAALIPYIAAGDPSPQATVPLMHALVRAGADLVELGVPFSDPMADGPVVQRAAERAIAQGVGLRRVLELVADFRRDDSVTPVVLMGYANPIERMGQRAFAQAAQAAGVDGVLVVDYPPEEVDEFAAMLAEAGVAPIFLLAPTSTEARIEAIGRVARGYVYYVSLKGVTGAGSLDTDDVARKLALIRRHVHIPVGVGFGIRDAASAQRIAAHADAVVIGSKLIETMEQTGAQAGADQKNEAAIAAAQQWLHTIRLALDDVKRENAPA</sequence>